<protein>
    <recommendedName>
        <fullName evidence="1">Thymidylate kinase</fullName>
        <ecNumber evidence="1">2.7.4.9</ecNumber>
    </recommendedName>
    <alternativeName>
        <fullName evidence="1">dTMP kinase</fullName>
    </alternativeName>
</protein>
<feature type="chain" id="PRO_1000203621" description="Thymidylate kinase">
    <location>
        <begin position="1"/>
        <end position="208"/>
    </location>
</feature>
<feature type="binding site" evidence="1">
    <location>
        <begin position="10"/>
        <end position="17"/>
    </location>
    <ligand>
        <name>ATP</name>
        <dbReference type="ChEBI" id="CHEBI:30616"/>
    </ligand>
</feature>
<organism>
    <name type="scientific">Listeria monocytogenes serotype 4b (strain CLIP80459)</name>
    <dbReference type="NCBI Taxonomy" id="568819"/>
    <lineage>
        <taxon>Bacteria</taxon>
        <taxon>Bacillati</taxon>
        <taxon>Bacillota</taxon>
        <taxon>Bacilli</taxon>
        <taxon>Bacillales</taxon>
        <taxon>Listeriaceae</taxon>
        <taxon>Listeria</taxon>
    </lineage>
</organism>
<comment type="function">
    <text evidence="1">Phosphorylation of dTMP to form dTDP in both de novo and salvage pathways of dTTP synthesis.</text>
</comment>
<comment type="catalytic activity">
    <reaction evidence="1">
        <text>dTMP + ATP = dTDP + ADP</text>
        <dbReference type="Rhea" id="RHEA:13517"/>
        <dbReference type="ChEBI" id="CHEBI:30616"/>
        <dbReference type="ChEBI" id="CHEBI:58369"/>
        <dbReference type="ChEBI" id="CHEBI:63528"/>
        <dbReference type="ChEBI" id="CHEBI:456216"/>
        <dbReference type="EC" id="2.7.4.9"/>
    </reaction>
</comment>
<comment type="similarity">
    <text evidence="1">Belongs to the thymidylate kinase family.</text>
</comment>
<keyword id="KW-0067">ATP-binding</keyword>
<keyword id="KW-0418">Kinase</keyword>
<keyword id="KW-0545">Nucleotide biosynthesis</keyword>
<keyword id="KW-0547">Nucleotide-binding</keyword>
<keyword id="KW-0808">Transferase</keyword>
<reference key="1">
    <citation type="journal article" date="2012" name="BMC Genomics">
        <title>Comparative genomics and transcriptomics of lineages I, II, and III strains of Listeria monocytogenes.</title>
        <authorList>
            <person name="Hain T."/>
            <person name="Ghai R."/>
            <person name="Billion A."/>
            <person name="Kuenne C.T."/>
            <person name="Steinweg C."/>
            <person name="Izar B."/>
            <person name="Mohamed W."/>
            <person name="Mraheil M."/>
            <person name="Domann E."/>
            <person name="Schaffrath S."/>
            <person name="Karst U."/>
            <person name="Goesmann A."/>
            <person name="Oehm S."/>
            <person name="Puhler A."/>
            <person name="Merkl R."/>
            <person name="Vorwerk S."/>
            <person name="Glaser P."/>
            <person name="Garrido P."/>
            <person name="Rusniok C."/>
            <person name="Buchrieser C."/>
            <person name="Goebel W."/>
            <person name="Chakraborty T."/>
        </authorList>
    </citation>
    <scope>NUCLEOTIDE SEQUENCE [LARGE SCALE GENOMIC DNA]</scope>
    <source>
        <strain>CLIP80459</strain>
    </source>
</reference>
<gene>
    <name evidence="1" type="primary">tmk</name>
    <name type="ordered locus">Lm4b_02666</name>
</gene>
<proteinExistence type="inferred from homology"/>
<evidence type="ECO:0000255" key="1">
    <source>
        <dbReference type="HAMAP-Rule" id="MF_00165"/>
    </source>
</evidence>
<accession>C1KZP7</accession>
<sequence>MKAIFITLEGPDGSGKTTVGTLLNQKMTEAGIDFIKTREPGGSPISEKVRNIVLGIGNEEMDPKTEVLLIAGARRQHVVETIRPALAAGKTVLCDRFMDSSLAYQGAGRDMNMEQVLQVNLYAIEDTLPDRTYYLDVPAEVGLARIAANKGREVNRLDKEDITYHEKVQAGYEKVINMFPERFMRVDATKTPEEITETILADILRQLA</sequence>
<dbReference type="EC" id="2.7.4.9" evidence="1"/>
<dbReference type="EMBL" id="FM242711">
    <property type="protein sequence ID" value="CAS06420.1"/>
    <property type="molecule type" value="Genomic_DNA"/>
</dbReference>
<dbReference type="RefSeq" id="WP_003722053.1">
    <property type="nucleotide sequence ID" value="NC_012488.1"/>
</dbReference>
<dbReference type="SMR" id="C1KZP7"/>
<dbReference type="KEGG" id="lmc:Lm4b_02666"/>
<dbReference type="HOGENOM" id="CLU_049131_0_2_9"/>
<dbReference type="GO" id="GO:0005829">
    <property type="term" value="C:cytosol"/>
    <property type="evidence" value="ECO:0007669"/>
    <property type="project" value="TreeGrafter"/>
</dbReference>
<dbReference type="GO" id="GO:0005524">
    <property type="term" value="F:ATP binding"/>
    <property type="evidence" value="ECO:0007669"/>
    <property type="project" value="UniProtKB-UniRule"/>
</dbReference>
<dbReference type="GO" id="GO:0004798">
    <property type="term" value="F:dTMP kinase activity"/>
    <property type="evidence" value="ECO:0007669"/>
    <property type="project" value="UniProtKB-UniRule"/>
</dbReference>
<dbReference type="GO" id="GO:0006233">
    <property type="term" value="P:dTDP biosynthetic process"/>
    <property type="evidence" value="ECO:0007669"/>
    <property type="project" value="InterPro"/>
</dbReference>
<dbReference type="GO" id="GO:0006235">
    <property type="term" value="P:dTTP biosynthetic process"/>
    <property type="evidence" value="ECO:0007669"/>
    <property type="project" value="UniProtKB-UniRule"/>
</dbReference>
<dbReference type="GO" id="GO:0006227">
    <property type="term" value="P:dUDP biosynthetic process"/>
    <property type="evidence" value="ECO:0007669"/>
    <property type="project" value="TreeGrafter"/>
</dbReference>
<dbReference type="CDD" id="cd01672">
    <property type="entry name" value="TMPK"/>
    <property type="match status" value="1"/>
</dbReference>
<dbReference type="FunFam" id="3.40.50.300:FF:000225">
    <property type="entry name" value="Thymidylate kinase"/>
    <property type="match status" value="1"/>
</dbReference>
<dbReference type="Gene3D" id="3.40.50.300">
    <property type="entry name" value="P-loop containing nucleotide triphosphate hydrolases"/>
    <property type="match status" value="1"/>
</dbReference>
<dbReference type="HAMAP" id="MF_00165">
    <property type="entry name" value="Thymidylate_kinase"/>
    <property type="match status" value="1"/>
</dbReference>
<dbReference type="InterPro" id="IPR027417">
    <property type="entry name" value="P-loop_NTPase"/>
</dbReference>
<dbReference type="InterPro" id="IPR039430">
    <property type="entry name" value="Thymidylate_kin-like_dom"/>
</dbReference>
<dbReference type="InterPro" id="IPR018095">
    <property type="entry name" value="Thymidylate_kin_CS"/>
</dbReference>
<dbReference type="InterPro" id="IPR018094">
    <property type="entry name" value="Thymidylate_kinase"/>
</dbReference>
<dbReference type="NCBIfam" id="TIGR00041">
    <property type="entry name" value="DTMP_kinase"/>
    <property type="match status" value="1"/>
</dbReference>
<dbReference type="PANTHER" id="PTHR10344">
    <property type="entry name" value="THYMIDYLATE KINASE"/>
    <property type="match status" value="1"/>
</dbReference>
<dbReference type="PANTHER" id="PTHR10344:SF4">
    <property type="entry name" value="UMP-CMP KINASE 2, MITOCHONDRIAL"/>
    <property type="match status" value="1"/>
</dbReference>
<dbReference type="Pfam" id="PF02223">
    <property type="entry name" value="Thymidylate_kin"/>
    <property type="match status" value="1"/>
</dbReference>
<dbReference type="SUPFAM" id="SSF52540">
    <property type="entry name" value="P-loop containing nucleoside triphosphate hydrolases"/>
    <property type="match status" value="1"/>
</dbReference>
<dbReference type="PROSITE" id="PS01331">
    <property type="entry name" value="THYMIDYLATE_KINASE"/>
    <property type="match status" value="1"/>
</dbReference>
<name>KTHY_LISMC</name>